<reference key="1">
    <citation type="journal article" date="1983" name="Cell">
        <title>Regions of allelic hypervariability in the murine A alpha immune response gene.</title>
        <authorList>
            <person name="Benoist C.O."/>
            <person name="Mathis D.J."/>
            <person name="Kanter M.R."/>
            <person name="Williams V.E."/>
            <person name="McDevitt H.O."/>
        </authorList>
    </citation>
    <scope>NUCLEOTIDE SEQUENCE [MRNA]</scope>
</reference>
<reference key="2">
    <citation type="journal article" date="2010" name="Cell">
        <title>A tissue-specific atlas of mouse protein phosphorylation and expression.</title>
        <authorList>
            <person name="Huttlin E.L."/>
            <person name="Jedrychowski M.P."/>
            <person name="Elias J.E."/>
            <person name="Goswami T."/>
            <person name="Rad R."/>
            <person name="Beausoleil S.A."/>
            <person name="Villen J."/>
            <person name="Haas W."/>
            <person name="Sowa M.E."/>
            <person name="Gygi S.P."/>
        </authorList>
    </citation>
    <scope>IDENTIFICATION BY MASS SPECTROMETRY [LARGE SCALE ANALYSIS]</scope>
    <source>
        <tissue>Heart</tissue>
        <tissue>Kidney</tissue>
        <tissue>Lung</tissue>
        <tissue>Spleen</tissue>
    </source>
</reference>
<gene>
    <name type="primary">H2-Aa</name>
</gene>
<keyword id="KW-1064">Adaptive immunity</keyword>
<keyword id="KW-1015">Disulfide bond</keyword>
<keyword id="KW-0325">Glycoprotein</keyword>
<keyword id="KW-0391">Immunity</keyword>
<keyword id="KW-0472">Membrane</keyword>
<keyword id="KW-0491">MHC II</keyword>
<keyword id="KW-1185">Reference proteome</keyword>
<keyword id="KW-0812">Transmembrane</keyword>
<keyword id="KW-1133">Transmembrane helix</keyword>
<sequence>EDDIEADHVGFYGISVYQSPGDIGQYTFEFDGDEWFYVDLDKKETVWRLPEFGQLTSFDPQGGLQEIATGKHNLGILTKRSNFTPATNEAPQATVFPKSPVLLGQPNTLICFVDNIFPPVINITWLRNSKSVTDGVYETSFLVNRDHSFHKLSYLTFIPSDDDIYDCKVEHWGLEEPVLKHWEPEIPAPMSELTETVVCALGLSVGLVGIVVGTIFIIQGLRSGGTSRHPGPL</sequence>
<comment type="subcellular location">
    <subcellularLocation>
        <location evidence="3">Membrane</location>
        <topology evidence="3">Single-pass type I membrane protein</topology>
    </subcellularLocation>
</comment>
<comment type="similarity">
    <text evidence="3">Belongs to the MHC class II family.</text>
</comment>
<name>HA2F_MOUSE</name>
<feature type="chain" id="PRO_0000080745" description="H-2 class II histocompatibility antigen, A-F alpha chain">
    <location>
        <begin position="1"/>
        <end position="233"/>
    </location>
</feature>
<feature type="topological domain" description="Extracellular" evidence="1">
    <location>
        <begin position="1"/>
        <end position="195"/>
    </location>
</feature>
<feature type="transmembrane region" description="Helical" evidence="1">
    <location>
        <begin position="196"/>
        <end position="221"/>
    </location>
</feature>
<feature type="topological domain" description="Cytoplasmic" evidence="1">
    <location>
        <begin position="222"/>
        <end position="233"/>
    </location>
</feature>
<feature type="domain" description="Ig-like C1-type">
    <location>
        <begin position="91"/>
        <end position="183"/>
    </location>
</feature>
<feature type="region of interest" description="Alpha-1">
    <location>
        <begin position="1"/>
        <end position="88"/>
    </location>
</feature>
<feature type="region of interest" description="Alpha-2">
    <location>
        <begin position="89"/>
        <end position="182"/>
    </location>
</feature>
<feature type="region of interest" description="Connecting peptide">
    <location>
        <begin position="183"/>
        <end position="195"/>
    </location>
</feature>
<feature type="glycosylation site" description="N-linked (GlcNAc...) asparagine" evidence="1">
    <location>
        <position position="122"/>
    </location>
</feature>
<feature type="disulfide bond" evidence="2">
    <location>
        <begin position="111"/>
        <end position="167"/>
    </location>
</feature>
<organism>
    <name type="scientific">Mus musculus</name>
    <name type="common">Mouse</name>
    <dbReference type="NCBI Taxonomy" id="10090"/>
    <lineage>
        <taxon>Eukaryota</taxon>
        <taxon>Metazoa</taxon>
        <taxon>Chordata</taxon>
        <taxon>Craniata</taxon>
        <taxon>Vertebrata</taxon>
        <taxon>Euteleostomi</taxon>
        <taxon>Mammalia</taxon>
        <taxon>Eutheria</taxon>
        <taxon>Euarchontoglires</taxon>
        <taxon>Glires</taxon>
        <taxon>Rodentia</taxon>
        <taxon>Myomorpha</taxon>
        <taxon>Muroidea</taxon>
        <taxon>Muridae</taxon>
        <taxon>Murinae</taxon>
        <taxon>Mus</taxon>
        <taxon>Mus</taxon>
    </lineage>
</organism>
<protein>
    <recommendedName>
        <fullName>H-2 class II histocompatibility antigen, A-F alpha chain</fullName>
    </recommendedName>
</protein>
<accession>P14435</accession>
<dbReference type="EMBL" id="K01924">
    <property type="status" value="NOT_ANNOTATED_CDS"/>
    <property type="molecule type" value="mRNA"/>
</dbReference>
<dbReference type="SMR" id="P14435"/>
<dbReference type="GlyCosmos" id="P14435">
    <property type="glycosylation" value="1 site, No reported glycans"/>
</dbReference>
<dbReference type="jPOST" id="P14435"/>
<dbReference type="ProteomicsDB" id="269805"/>
<dbReference type="AGR" id="MGI:95895"/>
<dbReference type="MGI" id="MGI:95895">
    <property type="gene designation" value="H2-Aa"/>
</dbReference>
<dbReference type="OrthoDB" id="8925804at2759"/>
<dbReference type="ChiTaRS" id="H2-Aa">
    <property type="organism name" value="mouse"/>
</dbReference>
<dbReference type="Proteomes" id="UP000000589">
    <property type="component" value="Unplaced"/>
</dbReference>
<dbReference type="GO" id="GO:0009897">
    <property type="term" value="C:external side of plasma membrane"/>
    <property type="evidence" value="ECO:0000314"/>
    <property type="project" value="MGI"/>
</dbReference>
<dbReference type="GO" id="GO:0005764">
    <property type="term" value="C:lysosome"/>
    <property type="evidence" value="ECO:0000314"/>
    <property type="project" value="MGI"/>
</dbReference>
<dbReference type="GO" id="GO:0042613">
    <property type="term" value="C:MHC class II protein complex"/>
    <property type="evidence" value="ECO:0000314"/>
    <property type="project" value="MGI"/>
</dbReference>
<dbReference type="GO" id="GO:0005886">
    <property type="term" value="C:plasma membrane"/>
    <property type="evidence" value="ECO:0000314"/>
    <property type="project" value="MGI"/>
</dbReference>
<dbReference type="GO" id="GO:0042605">
    <property type="term" value="F:peptide antigen binding"/>
    <property type="evidence" value="ECO:0000314"/>
    <property type="project" value="MGI"/>
</dbReference>
<dbReference type="GO" id="GO:0002250">
    <property type="term" value="P:adaptive immune response"/>
    <property type="evidence" value="ECO:0007669"/>
    <property type="project" value="UniProtKB-KW"/>
</dbReference>
<dbReference type="GO" id="GO:0019882">
    <property type="term" value="P:antigen processing and presentation"/>
    <property type="evidence" value="ECO:0000314"/>
    <property type="project" value="MGI"/>
</dbReference>
<dbReference type="GO" id="GO:0019886">
    <property type="term" value="P:antigen processing and presentation of exogenous peptide antigen via MHC class II"/>
    <property type="evidence" value="ECO:0000314"/>
    <property type="project" value="MGI"/>
</dbReference>
<dbReference type="GO" id="GO:0048002">
    <property type="term" value="P:antigen processing and presentation of peptide antigen"/>
    <property type="evidence" value="ECO:0000314"/>
    <property type="project" value="MGI"/>
</dbReference>
<dbReference type="GO" id="GO:0045582">
    <property type="term" value="P:positive regulation of T cell differentiation"/>
    <property type="evidence" value="ECO:0000314"/>
    <property type="project" value="MGI"/>
</dbReference>
<dbReference type="CDD" id="cd21006">
    <property type="entry name" value="IgC1_MHC_II_alpha_I-A"/>
    <property type="match status" value="1"/>
</dbReference>
<dbReference type="FunFam" id="2.60.40.10:FF:000280">
    <property type="entry name" value="HLA class II histocompatibility antigen, DR alpha chain"/>
    <property type="match status" value="1"/>
</dbReference>
<dbReference type="FunFam" id="3.10.320.10:FF:000002">
    <property type="entry name" value="HLA class II histocompatibility antigen, DR alpha chain"/>
    <property type="match status" value="1"/>
</dbReference>
<dbReference type="Gene3D" id="3.10.320.10">
    <property type="entry name" value="Class II Histocompatibility Antigen, M Beta Chain, Chain B, domain 1"/>
    <property type="match status" value="1"/>
</dbReference>
<dbReference type="Gene3D" id="2.60.40.10">
    <property type="entry name" value="Immunoglobulins"/>
    <property type="match status" value="1"/>
</dbReference>
<dbReference type="InterPro" id="IPR007110">
    <property type="entry name" value="Ig-like_dom"/>
</dbReference>
<dbReference type="InterPro" id="IPR036179">
    <property type="entry name" value="Ig-like_dom_sf"/>
</dbReference>
<dbReference type="InterPro" id="IPR013783">
    <property type="entry name" value="Ig-like_fold"/>
</dbReference>
<dbReference type="InterPro" id="IPR003006">
    <property type="entry name" value="Ig/MHC_CS"/>
</dbReference>
<dbReference type="InterPro" id="IPR003597">
    <property type="entry name" value="Ig_C1-set"/>
</dbReference>
<dbReference type="InterPro" id="IPR050160">
    <property type="entry name" value="MHC/Immunoglobulin"/>
</dbReference>
<dbReference type="InterPro" id="IPR011162">
    <property type="entry name" value="MHC_I/II-like_Ag-recog"/>
</dbReference>
<dbReference type="InterPro" id="IPR014745">
    <property type="entry name" value="MHC_II_a/b_N"/>
</dbReference>
<dbReference type="InterPro" id="IPR001003">
    <property type="entry name" value="MHC_II_a_N"/>
</dbReference>
<dbReference type="PANTHER" id="PTHR19944:SF59">
    <property type="entry name" value="HLA CLASS II HISTOCOMPATIBILITY ANTIGEN, DQ ALPHA 1 CHAIN"/>
    <property type="match status" value="1"/>
</dbReference>
<dbReference type="PANTHER" id="PTHR19944">
    <property type="entry name" value="MHC CLASS II-RELATED"/>
    <property type="match status" value="1"/>
</dbReference>
<dbReference type="Pfam" id="PF07654">
    <property type="entry name" value="C1-set"/>
    <property type="match status" value="1"/>
</dbReference>
<dbReference type="Pfam" id="PF00993">
    <property type="entry name" value="MHC_II_alpha"/>
    <property type="match status" value="1"/>
</dbReference>
<dbReference type="SMART" id="SM00407">
    <property type="entry name" value="IGc1"/>
    <property type="match status" value="1"/>
</dbReference>
<dbReference type="SMART" id="SM00920">
    <property type="entry name" value="MHC_II_alpha"/>
    <property type="match status" value="1"/>
</dbReference>
<dbReference type="SUPFAM" id="SSF48726">
    <property type="entry name" value="Immunoglobulin"/>
    <property type="match status" value="1"/>
</dbReference>
<dbReference type="SUPFAM" id="SSF54452">
    <property type="entry name" value="MHC antigen-recognition domain"/>
    <property type="match status" value="1"/>
</dbReference>
<dbReference type="PROSITE" id="PS50835">
    <property type="entry name" value="IG_LIKE"/>
    <property type="match status" value="1"/>
</dbReference>
<dbReference type="PROSITE" id="PS00290">
    <property type="entry name" value="IG_MHC"/>
    <property type="match status" value="1"/>
</dbReference>
<proteinExistence type="evidence at protein level"/>
<evidence type="ECO:0000255" key="1"/>
<evidence type="ECO:0000255" key="2">
    <source>
        <dbReference type="PROSITE-ProRule" id="PRU00114"/>
    </source>
</evidence>
<evidence type="ECO:0000305" key="3"/>